<accession>Q54TH5</accession>
<comment type="similarity">
    <text evidence="1">Belongs to the OPI10 family.</text>
</comment>
<feature type="chain" id="PRO_0000328393" description="Protein OPI10 homolog">
    <location>
        <begin position="1"/>
        <end position="217"/>
    </location>
</feature>
<name>OPI10_DICDI</name>
<keyword id="KW-1185">Reference proteome</keyword>
<protein>
    <recommendedName>
        <fullName>Protein OPI10 homolog</fullName>
    </recommendedName>
</protein>
<gene>
    <name type="ORF">DDB_G0281747</name>
</gene>
<dbReference type="EMBL" id="AAFI02000042">
    <property type="protein sequence ID" value="EAL66635.1"/>
    <property type="molecule type" value="Genomic_DNA"/>
</dbReference>
<dbReference type="RefSeq" id="XP_640616.1">
    <property type="nucleotide sequence ID" value="XM_635524.1"/>
</dbReference>
<dbReference type="SMR" id="Q54TH5"/>
<dbReference type="FunCoup" id="Q54TH5">
    <property type="interactions" value="75"/>
</dbReference>
<dbReference type="STRING" id="44689.Q54TH5"/>
<dbReference type="PaxDb" id="44689-DDB0305029"/>
<dbReference type="EnsemblProtists" id="EAL66635">
    <property type="protein sequence ID" value="EAL66635"/>
    <property type="gene ID" value="DDB_G0281747"/>
</dbReference>
<dbReference type="GeneID" id="8623226"/>
<dbReference type="KEGG" id="ddi:DDB_G0281747"/>
<dbReference type="dictyBase" id="DDB_G0281747"/>
<dbReference type="VEuPathDB" id="AmoebaDB:DDB_G0281747"/>
<dbReference type="eggNOG" id="KOG4067">
    <property type="taxonomic scope" value="Eukaryota"/>
</dbReference>
<dbReference type="HOGENOM" id="CLU_084839_1_1_1"/>
<dbReference type="InParanoid" id="Q54TH5"/>
<dbReference type="OMA" id="QVDETHC"/>
<dbReference type="PhylomeDB" id="Q54TH5"/>
<dbReference type="Reactome" id="R-DDI-3371453">
    <property type="pathway name" value="Regulation of HSF1-mediated heat shock response"/>
</dbReference>
<dbReference type="PRO" id="PR:Q54TH5"/>
<dbReference type="Proteomes" id="UP000002195">
    <property type="component" value="Chromosome 3"/>
</dbReference>
<dbReference type="GO" id="GO:0005829">
    <property type="term" value="C:cytosol"/>
    <property type="evidence" value="ECO:0000318"/>
    <property type="project" value="GO_Central"/>
</dbReference>
<dbReference type="GO" id="GO:0005634">
    <property type="term" value="C:nucleus"/>
    <property type="evidence" value="ECO:0000318"/>
    <property type="project" value="GO_Central"/>
</dbReference>
<dbReference type="GO" id="GO:0061608">
    <property type="term" value="F:nuclear import signal receptor activity"/>
    <property type="evidence" value="ECO:0000318"/>
    <property type="project" value="GO_Central"/>
</dbReference>
<dbReference type="GO" id="GO:0006606">
    <property type="term" value="P:protein import into nucleus"/>
    <property type="evidence" value="ECO:0000318"/>
    <property type="project" value="GO_Central"/>
</dbReference>
<dbReference type="InterPro" id="IPR048364">
    <property type="entry name" value="Hikeshi-like_C"/>
</dbReference>
<dbReference type="InterPro" id="IPR008493">
    <property type="entry name" value="Hikeshi-like_N"/>
</dbReference>
<dbReference type="InterPro" id="IPR031318">
    <property type="entry name" value="OPI10"/>
</dbReference>
<dbReference type="PANTHER" id="PTHR12925">
    <property type="entry name" value="HIKESHI FAMILY MEMBER"/>
    <property type="match status" value="1"/>
</dbReference>
<dbReference type="PANTHER" id="PTHR12925:SF0">
    <property type="entry name" value="PROTEIN HIKESHI"/>
    <property type="match status" value="1"/>
</dbReference>
<dbReference type="Pfam" id="PF21057">
    <property type="entry name" value="Hikeshi-like_C"/>
    <property type="match status" value="1"/>
</dbReference>
<dbReference type="Pfam" id="PF05603">
    <property type="entry name" value="Hikeshi-like_N"/>
    <property type="match status" value="1"/>
</dbReference>
<organism>
    <name type="scientific">Dictyostelium discoideum</name>
    <name type="common">Social amoeba</name>
    <dbReference type="NCBI Taxonomy" id="44689"/>
    <lineage>
        <taxon>Eukaryota</taxon>
        <taxon>Amoebozoa</taxon>
        <taxon>Evosea</taxon>
        <taxon>Eumycetozoa</taxon>
        <taxon>Dictyostelia</taxon>
        <taxon>Dictyosteliales</taxon>
        <taxon>Dictyosteliaceae</taxon>
        <taxon>Dictyostelium</taxon>
    </lineage>
</organism>
<evidence type="ECO:0000305" key="1"/>
<sequence length="217" mass="25012">MFALVVPPYPVNVAVQTISPTKYCFQFENRVQAKEFTLFLTDIQKFTPGYNAAIYLAYQPFTDWKYLGFINSNKPSIICKIPSETLDNNNNNNNNNNNNNNINNGFINNINSIIPTEIIQIGISIETDLEIQSKPPIEQQQQQQQQQQQQQNTSSTSINNFIKTEEFKQVAFKLCDNLVNYILSFSTSNNTVPSSSINKWYENFQKKLKNDQLDFLK</sequence>
<proteinExistence type="inferred from homology"/>
<reference key="1">
    <citation type="journal article" date="2005" name="Nature">
        <title>The genome of the social amoeba Dictyostelium discoideum.</title>
        <authorList>
            <person name="Eichinger L."/>
            <person name="Pachebat J.A."/>
            <person name="Gloeckner G."/>
            <person name="Rajandream M.A."/>
            <person name="Sucgang R."/>
            <person name="Berriman M."/>
            <person name="Song J."/>
            <person name="Olsen R."/>
            <person name="Szafranski K."/>
            <person name="Xu Q."/>
            <person name="Tunggal B."/>
            <person name="Kummerfeld S."/>
            <person name="Madera M."/>
            <person name="Konfortov B.A."/>
            <person name="Rivero F."/>
            <person name="Bankier A.T."/>
            <person name="Lehmann R."/>
            <person name="Hamlin N."/>
            <person name="Davies R."/>
            <person name="Gaudet P."/>
            <person name="Fey P."/>
            <person name="Pilcher K."/>
            <person name="Chen G."/>
            <person name="Saunders D."/>
            <person name="Sodergren E.J."/>
            <person name="Davis P."/>
            <person name="Kerhornou A."/>
            <person name="Nie X."/>
            <person name="Hall N."/>
            <person name="Anjard C."/>
            <person name="Hemphill L."/>
            <person name="Bason N."/>
            <person name="Farbrother P."/>
            <person name="Desany B."/>
            <person name="Just E."/>
            <person name="Morio T."/>
            <person name="Rost R."/>
            <person name="Churcher C.M."/>
            <person name="Cooper J."/>
            <person name="Haydock S."/>
            <person name="van Driessche N."/>
            <person name="Cronin A."/>
            <person name="Goodhead I."/>
            <person name="Muzny D.M."/>
            <person name="Mourier T."/>
            <person name="Pain A."/>
            <person name="Lu M."/>
            <person name="Harper D."/>
            <person name="Lindsay R."/>
            <person name="Hauser H."/>
            <person name="James K.D."/>
            <person name="Quiles M."/>
            <person name="Madan Babu M."/>
            <person name="Saito T."/>
            <person name="Buchrieser C."/>
            <person name="Wardroper A."/>
            <person name="Felder M."/>
            <person name="Thangavelu M."/>
            <person name="Johnson D."/>
            <person name="Knights A."/>
            <person name="Loulseged H."/>
            <person name="Mungall K.L."/>
            <person name="Oliver K."/>
            <person name="Price C."/>
            <person name="Quail M.A."/>
            <person name="Urushihara H."/>
            <person name="Hernandez J."/>
            <person name="Rabbinowitsch E."/>
            <person name="Steffen D."/>
            <person name="Sanders M."/>
            <person name="Ma J."/>
            <person name="Kohara Y."/>
            <person name="Sharp S."/>
            <person name="Simmonds M.N."/>
            <person name="Spiegler S."/>
            <person name="Tivey A."/>
            <person name="Sugano S."/>
            <person name="White B."/>
            <person name="Walker D."/>
            <person name="Woodward J.R."/>
            <person name="Winckler T."/>
            <person name="Tanaka Y."/>
            <person name="Shaulsky G."/>
            <person name="Schleicher M."/>
            <person name="Weinstock G.M."/>
            <person name="Rosenthal A."/>
            <person name="Cox E.C."/>
            <person name="Chisholm R.L."/>
            <person name="Gibbs R.A."/>
            <person name="Loomis W.F."/>
            <person name="Platzer M."/>
            <person name="Kay R.R."/>
            <person name="Williams J.G."/>
            <person name="Dear P.H."/>
            <person name="Noegel A.A."/>
            <person name="Barrell B.G."/>
            <person name="Kuspa A."/>
        </authorList>
    </citation>
    <scope>NUCLEOTIDE SEQUENCE [LARGE SCALE GENOMIC DNA]</scope>
    <source>
        <strain>AX4</strain>
    </source>
</reference>